<keyword id="KW-0030">Aminoacyl-tRNA synthetase</keyword>
<keyword id="KW-0067">ATP-binding</keyword>
<keyword id="KW-0963">Cytoplasm</keyword>
<keyword id="KW-0436">Ligase</keyword>
<keyword id="KW-0547">Nucleotide-binding</keyword>
<keyword id="KW-0648">Protein biosynthesis</keyword>
<keyword id="KW-1185">Reference proteome</keyword>
<organism>
    <name type="scientific">Stutzerimonas stutzeri (strain A1501)</name>
    <name type="common">Pseudomonas stutzeri</name>
    <dbReference type="NCBI Taxonomy" id="379731"/>
    <lineage>
        <taxon>Bacteria</taxon>
        <taxon>Pseudomonadati</taxon>
        <taxon>Pseudomonadota</taxon>
        <taxon>Gammaproteobacteria</taxon>
        <taxon>Pseudomonadales</taxon>
        <taxon>Pseudomonadaceae</taxon>
        <taxon>Stutzerimonas</taxon>
    </lineage>
</organism>
<dbReference type="EC" id="6.1.1.14" evidence="1"/>
<dbReference type="EMBL" id="CP000304">
    <property type="protein sequence ID" value="ABP77717.1"/>
    <property type="molecule type" value="Genomic_DNA"/>
</dbReference>
<dbReference type="RefSeq" id="WP_011911260.1">
    <property type="nucleotide sequence ID" value="NC_009434.1"/>
</dbReference>
<dbReference type="SMR" id="A4VFG6"/>
<dbReference type="KEGG" id="psa:PST_0009"/>
<dbReference type="eggNOG" id="COG0751">
    <property type="taxonomic scope" value="Bacteria"/>
</dbReference>
<dbReference type="HOGENOM" id="CLU_007220_2_2_6"/>
<dbReference type="Proteomes" id="UP000000233">
    <property type="component" value="Chromosome"/>
</dbReference>
<dbReference type="GO" id="GO:0005829">
    <property type="term" value="C:cytosol"/>
    <property type="evidence" value="ECO:0007669"/>
    <property type="project" value="TreeGrafter"/>
</dbReference>
<dbReference type="GO" id="GO:0004814">
    <property type="term" value="F:arginine-tRNA ligase activity"/>
    <property type="evidence" value="ECO:0007669"/>
    <property type="project" value="InterPro"/>
</dbReference>
<dbReference type="GO" id="GO:0005524">
    <property type="term" value="F:ATP binding"/>
    <property type="evidence" value="ECO:0007669"/>
    <property type="project" value="UniProtKB-UniRule"/>
</dbReference>
<dbReference type="GO" id="GO:0004820">
    <property type="term" value="F:glycine-tRNA ligase activity"/>
    <property type="evidence" value="ECO:0007669"/>
    <property type="project" value="UniProtKB-UniRule"/>
</dbReference>
<dbReference type="GO" id="GO:0006420">
    <property type="term" value="P:arginyl-tRNA aminoacylation"/>
    <property type="evidence" value="ECO:0007669"/>
    <property type="project" value="InterPro"/>
</dbReference>
<dbReference type="GO" id="GO:0006426">
    <property type="term" value="P:glycyl-tRNA aminoacylation"/>
    <property type="evidence" value="ECO:0007669"/>
    <property type="project" value="UniProtKB-UniRule"/>
</dbReference>
<dbReference type="HAMAP" id="MF_00255">
    <property type="entry name" value="Gly_tRNA_synth_beta"/>
    <property type="match status" value="1"/>
</dbReference>
<dbReference type="InterPro" id="IPR008909">
    <property type="entry name" value="DALR_anticod-bd"/>
</dbReference>
<dbReference type="InterPro" id="IPR015944">
    <property type="entry name" value="Gly-tRNA-synth_bsu"/>
</dbReference>
<dbReference type="InterPro" id="IPR006194">
    <property type="entry name" value="Gly-tRNA-synth_heterodimer"/>
</dbReference>
<dbReference type="NCBIfam" id="TIGR00211">
    <property type="entry name" value="glyS"/>
    <property type="match status" value="1"/>
</dbReference>
<dbReference type="PANTHER" id="PTHR30075:SF2">
    <property type="entry name" value="GLYCINE--TRNA LIGASE, CHLOROPLASTIC_MITOCHONDRIAL 2"/>
    <property type="match status" value="1"/>
</dbReference>
<dbReference type="PANTHER" id="PTHR30075">
    <property type="entry name" value="GLYCYL-TRNA SYNTHETASE"/>
    <property type="match status" value="1"/>
</dbReference>
<dbReference type="Pfam" id="PF05746">
    <property type="entry name" value="DALR_1"/>
    <property type="match status" value="1"/>
</dbReference>
<dbReference type="Pfam" id="PF02092">
    <property type="entry name" value="tRNA_synt_2f"/>
    <property type="match status" value="1"/>
</dbReference>
<dbReference type="PRINTS" id="PR01045">
    <property type="entry name" value="TRNASYNTHGB"/>
</dbReference>
<dbReference type="SUPFAM" id="SSF109604">
    <property type="entry name" value="HD-domain/PDEase-like"/>
    <property type="match status" value="1"/>
</dbReference>
<dbReference type="PROSITE" id="PS50861">
    <property type="entry name" value="AA_TRNA_LIGASE_II_GLYAB"/>
    <property type="match status" value="1"/>
</dbReference>
<evidence type="ECO:0000255" key="1">
    <source>
        <dbReference type="HAMAP-Rule" id="MF_00255"/>
    </source>
</evidence>
<name>SYGB_STUS1</name>
<feature type="chain" id="PRO_1000006395" description="Glycine--tRNA ligase beta subunit">
    <location>
        <begin position="1"/>
        <end position="684"/>
    </location>
</feature>
<comment type="catalytic activity">
    <reaction evidence="1">
        <text>tRNA(Gly) + glycine + ATP = glycyl-tRNA(Gly) + AMP + diphosphate</text>
        <dbReference type="Rhea" id="RHEA:16013"/>
        <dbReference type="Rhea" id="RHEA-COMP:9664"/>
        <dbReference type="Rhea" id="RHEA-COMP:9683"/>
        <dbReference type="ChEBI" id="CHEBI:30616"/>
        <dbReference type="ChEBI" id="CHEBI:33019"/>
        <dbReference type="ChEBI" id="CHEBI:57305"/>
        <dbReference type="ChEBI" id="CHEBI:78442"/>
        <dbReference type="ChEBI" id="CHEBI:78522"/>
        <dbReference type="ChEBI" id="CHEBI:456215"/>
        <dbReference type="EC" id="6.1.1.14"/>
    </reaction>
</comment>
<comment type="subunit">
    <text evidence="1">Tetramer of two alpha and two beta subunits.</text>
</comment>
<comment type="subcellular location">
    <subcellularLocation>
        <location evidence="1">Cytoplasm</location>
    </subcellularLocation>
</comment>
<comment type="similarity">
    <text evidence="1">Belongs to the class-II aminoacyl-tRNA synthetase family.</text>
</comment>
<gene>
    <name evidence="1" type="primary">glyS</name>
    <name type="ordered locus">PST_0009</name>
</gene>
<protein>
    <recommendedName>
        <fullName evidence="1">Glycine--tRNA ligase beta subunit</fullName>
        <ecNumber evidence="1">6.1.1.14</ecNumber>
    </recommendedName>
    <alternativeName>
        <fullName evidence="1">Glycyl-tRNA synthetase beta subunit</fullName>
        <shortName evidence="1">GlyRS</shortName>
    </alternativeName>
</protein>
<proteinExistence type="inferred from homology"/>
<accession>A4VFG6</accession>
<reference key="1">
    <citation type="journal article" date="2008" name="Proc. Natl. Acad. Sci. U.S.A.">
        <title>Nitrogen fixation island and rhizosphere competence traits in the genome of root-associated Pseudomonas stutzeri A1501.</title>
        <authorList>
            <person name="Yan Y."/>
            <person name="Yang J."/>
            <person name="Dou Y."/>
            <person name="Chen M."/>
            <person name="Ping S."/>
            <person name="Peng J."/>
            <person name="Lu W."/>
            <person name="Zhang W."/>
            <person name="Yao Z."/>
            <person name="Li H."/>
            <person name="Liu W."/>
            <person name="He S."/>
            <person name="Geng L."/>
            <person name="Zhang X."/>
            <person name="Yang F."/>
            <person name="Yu H."/>
            <person name="Zhan Y."/>
            <person name="Li D."/>
            <person name="Lin Z."/>
            <person name="Wang Y."/>
            <person name="Elmerich C."/>
            <person name="Lin M."/>
            <person name="Jin Q."/>
        </authorList>
    </citation>
    <scope>NUCLEOTIDE SEQUENCE [LARGE SCALE GENOMIC DNA]</scope>
    <source>
        <strain>A1501</strain>
    </source>
</reference>
<sequence length="684" mass="74904">MSALDFLVELGTEELPPKALAKLADAFCAGIEKGLKDAGLGFAKAQAYAAPRRLAVLVEQLATQQPDRSINLDGPPMQAAFDAHGEPTQAALGFARKCGVDLAEIDRSGPKLKFSRTIEGQPATQLLPGIVEASLNDLPIPKRMRWAARKEEFVRPTQWLVMLFGEQVIDCEILAQRAGRESRGHRFHSPGQVHISKPSSYLEDLRGAHVIADFAERRELIAKRVEQLASEQNGSAIVPPALLDEVTALVEWPVPLVCSFEERFLEVPQEALISTMQDNQKYFCLLDTNGKLLPRFITVANIESKDPAQIVSGNEKVVRPRLTDAEFFFKQDKKQPLERFNDRLKNVVFQAQLGTVFDKAERVSRLAGLIAERTGGDKARAMRAGLLSKADLATEMVGEFPEMQGIAGYYYALNEGEPEDVALALNEQYMPRGAGGELPSTLTGAAVAVADKLDTLVGIFGIGMLPTGSKDPYALRRAALGVLRILIEKQLDLNLVEAVNFAIGQFGTQVKSAGLADQVLEFIFDRLRARYEDEGVDVAAYLSVRAVQPGSALDFDQRVQAVQAFRTLPEAEALAAANKRVSNLLAKFEAKLPEAVEPRWFDNATEFSLYSALQQAEQAVQPLAAARQYREALERLAHLRGPVDAFFEAVLVNAEDASVRANRYALLARLRGLFLGVADISALG</sequence>